<feature type="chain" id="PRO_0000209773" description="DegV domain-containing protein MG450">
    <location>
        <begin position="1"/>
        <end position="290"/>
    </location>
</feature>
<feature type="domain" description="DegV" evidence="3">
    <location>
        <begin position="3"/>
        <end position="289"/>
    </location>
</feature>
<feature type="binding site" evidence="2">
    <location>
        <position position="65"/>
    </location>
    <ligand>
        <name>hexadecanoate</name>
        <dbReference type="ChEBI" id="CHEBI:7896"/>
    </ligand>
</feature>
<feature type="binding site" evidence="2">
    <location>
        <position position="97"/>
    </location>
    <ligand>
        <name>hexadecanoate</name>
        <dbReference type="ChEBI" id="CHEBI:7896"/>
    </ligand>
</feature>
<comment type="function">
    <text evidence="1">May bind long-chain fatty acids, such as palmitate, and may play a role in lipid transport or fatty acid metabolism.</text>
</comment>
<comment type="disruption phenotype">
    <text evidence="4">Probably essential, it was not disrupted in a global transposon mutagenesis study.</text>
</comment>
<dbReference type="EMBL" id="L43967">
    <property type="protein sequence ID" value="AAC72470.2"/>
    <property type="molecule type" value="Genomic_DNA"/>
</dbReference>
<dbReference type="PIR" id="G64249">
    <property type="entry name" value="G64249"/>
</dbReference>
<dbReference type="RefSeq" id="WP_009885584.1">
    <property type="nucleotide sequence ID" value="NC_000908.2"/>
</dbReference>
<dbReference type="SMR" id="P47688"/>
<dbReference type="STRING" id="243273.MG_450"/>
<dbReference type="GeneID" id="88282630"/>
<dbReference type="KEGG" id="mge:MG_450"/>
<dbReference type="eggNOG" id="COG1307">
    <property type="taxonomic scope" value="Bacteria"/>
</dbReference>
<dbReference type="HOGENOM" id="CLU_048251_1_0_14"/>
<dbReference type="InParanoid" id="P47688"/>
<dbReference type="OrthoDB" id="384457at2"/>
<dbReference type="BioCyc" id="MGEN243273:G1GJ2-543-MONOMER"/>
<dbReference type="Proteomes" id="UP000000807">
    <property type="component" value="Chromosome"/>
</dbReference>
<dbReference type="GO" id="GO:0008289">
    <property type="term" value="F:lipid binding"/>
    <property type="evidence" value="ECO:0007669"/>
    <property type="project" value="UniProtKB-KW"/>
</dbReference>
<dbReference type="Gene3D" id="3.30.1180.10">
    <property type="match status" value="1"/>
</dbReference>
<dbReference type="Gene3D" id="3.40.50.10170">
    <property type="match status" value="1"/>
</dbReference>
<dbReference type="InterPro" id="IPR003797">
    <property type="entry name" value="DegV"/>
</dbReference>
<dbReference type="InterPro" id="IPR043168">
    <property type="entry name" value="DegV_C"/>
</dbReference>
<dbReference type="InterPro" id="IPR050270">
    <property type="entry name" value="DegV_domain_contain"/>
</dbReference>
<dbReference type="NCBIfam" id="TIGR00762">
    <property type="entry name" value="DegV"/>
    <property type="match status" value="1"/>
</dbReference>
<dbReference type="PANTHER" id="PTHR33434">
    <property type="entry name" value="DEGV DOMAIN-CONTAINING PROTEIN DR_1986-RELATED"/>
    <property type="match status" value="1"/>
</dbReference>
<dbReference type="PANTHER" id="PTHR33434:SF2">
    <property type="entry name" value="FATTY ACID-BINDING PROTEIN TM_1468"/>
    <property type="match status" value="1"/>
</dbReference>
<dbReference type="Pfam" id="PF02645">
    <property type="entry name" value="DegV"/>
    <property type="match status" value="1"/>
</dbReference>
<dbReference type="SUPFAM" id="SSF82549">
    <property type="entry name" value="DAK1/DegV-like"/>
    <property type="match status" value="1"/>
</dbReference>
<dbReference type="PROSITE" id="PS51482">
    <property type="entry name" value="DEGV"/>
    <property type="match status" value="1"/>
</dbReference>
<protein>
    <recommendedName>
        <fullName>DegV domain-containing protein MG450</fullName>
    </recommendedName>
</protein>
<gene>
    <name type="ordered locus">MG450</name>
</gene>
<reference key="1">
    <citation type="journal article" date="1995" name="Science">
        <title>The minimal gene complement of Mycoplasma genitalium.</title>
        <authorList>
            <person name="Fraser C.M."/>
            <person name="Gocayne J.D."/>
            <person name="White O."/>
            <person name="Adams M.D."/>
            <person name="Clayton R.A."/>
            <person name="Fleischmann R.D."/>
            <person name="Bult C.J."/>
            <person name="Kerlavage A.R."/>
            <person name="Sutton G.G."/>
            <person name="Kelley J.M."/>
            <person name="Fritchman J.L."/>
            <person name="Weidman J.F."/>
            <person name="Small K.V."/>
            <person name="Sandusky M."/>
            <person name="Fuhrmann J.L."/>
            <person name="Nguyen D.T."/>
            <person name="Utterback T.R."/>
            <person name="Saudek D.M."/>
            <person name="Phillips C.A."/>
            <person name="Merrick J.M."/>
            <person name="Tomb J.-F."/>
            <person name="Dougherty B.A."/>
            <person name="Bott K.F."/>
            <person name="Hu P.-C."/>
            <person name="Lucier T.S."/>
            <person name="Peterson S.N."/>
            <person name="Smith H.O."/>
            <person name="Hutchison C.A. III"/>
            <person name="Venter J.C."/>
        </authorList>
    </citation>
    <scope>NUCLEOTIDE SEQUENCE [LARGE SCALE GENOMIC DNA]</scope>
    <source>
        <strain>ATCC 33530 / DSM 19775 / NCTC 10195 / G37</strain>
    </source>
</reference>
<reference key="2">
    <citation type="journal article" date="2006" name="Proc. Natl. Acad. Sci. U.S.A.">
        <title>Essential genes of a minimal bacterium.</title>
        <authorList>
            <person name="Glass J.I."/>
            <person name="Assad-Garcia N."/>
            <person name="Alperovich N."/>
            <person name="Yooseph S."/>
            <person name="Lewis M.R."/>
            <person name="Maruf M."/>
            <person name="Hutchison C.A. III"/>
            <person name="Smith H.O."/>
            <person name="Venter J.C."/>
        </authorList>
    </citation>
    <scope>SEQUENCE REVISION</scope>
    <scope>DISRUPTION PHENOTYPE</scope>
    <source>
        <strain>ATCC 33530 / DSM 19775 / NCTC 10195 / G37</strain>
    </source>
</reference>
<proteinExistence type="inferred from homology"/>
<evidence type="ECO:0000250" key="1"/>
<evidence type="ECO:0000250" key="2">
    <source>
        <dbReference type="UniProtKB" id="Q9X1H9"/>
    </source>
</evidence>
<evidence type="ECO:0000255" key="3">
    <source>
        <dbReference type="PROSITE-ProRule" id="PRU00815"/>
    </source>
</evidence>
<evidence type="ECO:0000269" key="4">
    <source>
    </source>
</evidence>
<name>Y450_MYCGE</name>
<accession>P47688</accession>
<sequence>MRIAFLVDSVSNLKEDKNSHLYVLPLYIIETIAEHQETFKSGFNIDLKTLTDKMINAPKGVKFSTSQTSEEEVRDKVKSIINDYDLIIGIPIDKEISTSYLNWKIVEKEFEDKFHVLDSRIVEVLIAWLISDIKVWLKNNQYSRAGLDEFVYNFRNKCGAILFVTDTKPLVAGGRLSNLKSFIIKSFKFHLLISFLGETGKLQFFNKAQSASSAHKLAVQFLEKKLLKKEVNFRRAALLTTMFETDKNQLIKQEFVTLLNNAVDVSEHLLSPVICTHTGINSYAFLIQTE</sequence>
<organism>
    <name type="scientific">Mycoplasma genitalium (strain ATCC 33530 / DSM 19775 / NCTC 10195 / G37)</name>
    <name type="common">Mycoplasmoides genitalium</name>
    <dbReference type="NCBI Taxonomy" id="243273"/>
    <lineage>
        <taxon>Bacteria</taxon>
        <taxon>Bacillati</taxon>
        <taxon>Mycoplasmatota</taxon>
        <taxon>Mycoplasmoidales</taxon>
        <taxon>Mycoplasmoidaceae</taxon>
        <taxon>Mycoplasmoides</taxon>
    </lineage>
</organism>
<keyword id="KW-0446">Lipid-binding</keyword>
<keyword id="KW-1185">Reference proteome</keyword>